<keyword id="KW-0058">Aromatic hydrocarbons catabolism</keyword>
<keyword id="KW-0456">Lyase</keyword>
<keyword id="KW-0464">Manganese</keyword>
<keyword id="KW-0479">Metal-binding</keyword>
<name>HOA_SERP5</name>
<comment type="function">
    <text evidence="1">Catalyzes the retro-aldol cleavage of 4-hydroxy-2-oxopentanoate to pyruvate and acetaldehyde. Is involved in the meta-cleavage pathway for the degradation of aromatic compounds.</text>
</comment>
<comment type="catalytic activity">
    <reaction evidence="1">
        <text>(S)-4-hydroxy-2-oxopentanoate = acetaldehyde + pyruvate</text>
        <dbReference type="Rhea" id="RHEA:22624"/>
        <dbReference type="ChEBI" id="CHEBI:15343"/>
        <dbReference type="ChEBI" id="CHEBI:15361"/>
        <dbReference type="ChEBI" id="CHEBI:73143"/>
        <dbReference type="EC" id="4.1.3.39"/>
    </reaction>
</comment>
<comment type="pathway">
    <text evidence="1">Aromatic compound metabolism; 3-phenylpropanoate degradation.</text>
</comment>
<comment type="subunit">
    <text evidence="1">Interacts with MhpF.</text>
</comment>
<comment type="similarity">
    <text evidence="1">Belongs to the 4-hydroxy-2-oxovalerate aldolase family.</text>
</comment>
<organism>
    <name type="scientific">Serratia proteamaculans (strain 568)</name>
    <dbReference type="NCBI Taxonomy" id="399741"/>
    <lineage>
        <taxon>Bacteria</taxon>
        <taxon>Pseudomonadati</taxon>
        <taxon>Pseudomonadota</taxon>
        <taxon>Gammaproteobacteria</taxon>
        <taxon>Enterobacterales</taxon>
        <taxon>Yersiniaceae</taxon>
        <taxon>Serratia</taxon>
    </lineage>
</organism>
<feature type="chain" id="PRO_0000387914" description="4-hydroxy-2-oxovalerate aldolase">
    <location>
        <begin position="1"/>
        <end position="333"/>
    </location>
</feature>
<feature type="domain" description="Pyruvate carboxyltransferase" evidence="1">
    <location>
        <begin position="3"/>
        <end position="253"/>
    </location>
</feature>
<feature type="active site" description="Proton acceptor" evidence="1">
    <location>
        <position position="15"/>
    </location>
</feature>
<feature type="binding site" evidence="1">
    <location>
        <begin position="11"/>
        <end position="12"/>
    </location>
    <ligand>
        <name>substrate</name>
    </ligand>
</feature>
<feature type="binding site" evidence="1">
    <location>
        <position position="12"/>
    </location>
    <ligand>
        <name>Mn(2+)</name>
        <dbReference type="ChEBI" id="CHEBI:29035"/>
    </ligand>
</feature>
<feature type="binding site" evidence="1">
    <location>
        <position position="165"/>
    </location>
    <ligand>
        <name>substrate</name>
    </ligand>
</feature>
<feature type="binding site" evidence="1">
    <location>
        <position position="192"/>
    </location>
    <ligand>
        <name>Mn(2+)</name>
        <dbReference type="ChEBI" id="CHEBI:29035"/>
    </ligand>
</feature>
<feature type="binding site" evidence="1">
    <location>
        <position position="192"/>
    </location>
    <ligand>
        <name>substrate</name>
    </ligand>
</feature>
<feature type="binding site" evidence="1">
    <location>
        <position position="194"/>
    </location>
    <ligand>
        <name>Mn(2+)</name>
        <dbReference type="ChEBI" id="CHEBI:29035"/>
    </ligand>
</feature>
<feature type="site" description="Transition state stabilizer" evidence="1">
    <location>
        <position position="11"/>
    </location>
</feature>
<protein>
    <recommendedName>
        <fullName evidence="1">4-hydroxy-2-oxovalerate aldolase</fullName>
        <shortName evidence="1">HOA</shortName>
        <ecNumber evidence="1">4.1.3.39</ecNumber>
    </recommendedName>
    <alternativeName>
        <fullName evidence="1">4-hydroxy-2-keto-pentanoic acid aldolase</fullName>
    </alternativeName>
    <alternativeName>
        <fullName evidence="1">4-hydroxy-2-oxopentanoate aldolase</fullName>
    </alternativeName>
</protein>
<sequence>MTILINDSTLRDGQHAVKHQLTAAQLRSYATAADKTGVAIVEVGHGNGLGASSYQVGRAALSDEEMLTTVRESLQNSKMGVFMLPGWGTIADLTKALAYGTDVVRIGTHCTEATLAERHLGWLREQGAEAHAVLMMSHMASPAELADQAELLVGYGAQAVGIMDSAGSLLPQDVTARITAMRMQVKVPLIFHAHNNLGMAVANSLAAVQAGAGIIDGCARGFGAGAGNTQLEVLIPVLERLGFNTGIDLYHFLDAADLAARELMVVPPMIDSLGIVSGLAGVFSGFKSPVLNHAGSAGVDARDVFFELGRRQIIAGQEDLIVEVVAELKRAAS</sequence>
<accession>A8GG86</accession>
<gene>
    <name evidence="1" type="primary">mhpE</name>
    <name type="ordered locus">Spro_3025</name>
</gene>
<reference key="1">
    <citation type="submission" date="2007-09" db="EMBL/GenBank/DDBJ databases">
        <title>Complete sequence of chromosome of Serratia proteamaculans 568.</title>
        <authorList>
            <consortium name="US DOE Joint Genome Institute"/>
            <person name="Copeland A."/>
            <person name="Lucas S."/>
            <person name="Lapidus A."/>
            <person name="Barry K."/>
            <person name="Glavina del Rio T."/>
            <person name="Dalin E."/>
            <person name="Tice H."/>
            <person name="Pitluck S."/>
            <person name="Chain P."/>
            <person name="Malfatti S."/>
            <person name="Shin M."/>
            <person name="Vergez L."/>
            <person name="Schmutz J."/>
            <person name="Larimer F."/>
            <person name="Land M."/>
            <person name="Hauser L."/>
            <person name="Kyrpides N."/>
            <person name="Kim E."/>
            <person name="Taghavi S."/>
            <person name="Newman L."/>
            <person name="Vangronsveld J."/>
            <person name="van der Lelie D."/>
            <person name="Richardson P."/>
        </authorList>
    </citation>
    <scope>NUCLEOTIDE SEQUENCE [LARGE SCALE GENOMIC DNA]</scope>
    <source>
        <strain>568</strain>
    </source>
</reference>
<proteinExistence type="inferred from homology"/>
<dbReference type="EC" id="4.1.3.39" evidence="1"/>
<dbReference type="EMBL" id="CP000826">
    <property type="protein sequence ID" value="ABV42126.1"/>
    <property type="molecule type" value="Genomic_DNA"/>
</dbReference>
<dbReference type="SMR" id="A8GG86"/>
<dbReference type="STRING" id="399741.Spro_3025"/>
<dbReference type="KEGG" id="spe:Spro_3025"/>
<dbReference type="eggNOG" id="COG0119">
    <property type="taxonomic scope" value="Bacteria"/>
</dbReference>
<dbReference type="HOGENOM" id="CLU_049173_0_0_6"/>
<dbReference type="OrthoDB" id="9803573at2"/>
<dbReference type="UniPathway" id="UPA00714"/>
<dbReference type="GO" id="GO:0003852">
    <property type="term" value="F:2-isopropylmalate synthase activity"/>
    <property type="evidence" value="ECO:0007669"/>
    <property type="project" value="TreeGrafter"/>
</dbReference>
<dbReference type="GO" id="GO:0008701">
    <property type="term" value="F:4-hydroxy-2-oxovalerate aldolase activity"/>
    <property type="evidence" value="ECO:0007669"/>
    <property type="project" value="UniProtKB-UniRule"/>
</dbReference>
<dbReference type="GO" id="GO:0030145">
    <property type="term" value="F:manganese ion binding"/>
    <property type="evidence" value="ECO:0007669"/>
    <property type="project" value="UniProtKB-UniRule"/>
</dbReference>
<dbReference type="GO" id="GO:0019380">
    <property type="term" value="P:3-phenylpropionate catabolic process"/>
    <property type="evidence" value="ECO:0007669"/>
    <property type="project" value="UniProtKB-UniRule"/>
</dbReference>
<dbReference type="GO" id="GO:0009098">
    <property type="term" value="P:L-leucine biosynthetic process"/>
    <property type="evidence" value="ECO:0007669"/>
    <property type="project" value="TreeGrafter"/>
</dbReference>
<dbReference type="CDD" id="cd07943">
    <property type="entry name" value="DRE_TIM_HOA"/>
    <property type="match status" value="1"/>
</dbReference>
<dbReference type="Gene3D" id="1.10.8.60">
    <property type="match status" value="1"/>
</dbReference>
<dbReference type="Gene3D" id="3.20.20.70">
    <property type="entry name" value="Aldolase class I"/>
    <property type="match status" value="1"/>
</dbReference>
<dbReference type="HAMAP" id="MF_01656">
    <property type="entry name" value="HOA"/>
    <property type="match status" value="1"/>
</dbReference>
<dbReference type="InterPro" id="IPR050073">
    <property type="entry name" value="2-IPM_HCS-like"/>
</dbReference>
<dbReference type="InterPro" id="IPR017629">
    <property type="entry name" value="4OH_2_O-val_aldolase"/>
</dbReference>
<dbReference type="InterPro" id="IPR013785">
    <property type="entry name" value="Aldolase_TIM"/>
</dbReference>
<dbReference type="InterPro" id="IPR012425">
    <property type="entry name" value="DmpG_comm"/>
</dbReference>
<dbReference type="InterPro" id="IPR035685">
    <property type="entry name" value="DRE_TIM_HOA"/>
</dbReference>
<dbReference type="InterPro" id="IPR000891">
    <property type="entry name" value="PYR_CT"/>
</dbReference>
<dbReference type="NCBIfam" id="TIGR03217">
    <property type="entry name" value="4OH_2_O_val_ald"/>
    <property type="match status" value="1"/>
</dbReference>
<dbReference type="NCBIfam" id="NF006049">
    <property type="entry name" value="PRK08195.1"/>
    <property type="match status" value="1"/>
</dbReference>
<dbReference type="PANTHER" id="PTHR10277:SF9">
    <property type="entry name" value="2-ISOPROPYLMALATE SYNTHASE 1, CHLOROPLASTIC-RELATED"/>
    <property type="match status" value="1"/>
</dbReference>
<dbReference type="PANTHER" id="PTHR10277">
    <property type="entry name" value="HOMOCITRATE SYNTHASE-RELATED"/>
    <property type="match status" value="1"/>
</dbReference>
<dbReference type="Pfam" id="PF07836">
    <property type="entry name" value="DmpG_comm"/>
    <property type="match status" value="1"/>
</dbReference>
<dbReference type="Pfam" id="PF00682">
    <property type="entry name" value="HMGL-like"/>
    <property type="match status" value="1"/>
</dbReference>
<dbReference type="SUPFAM" id="SSF51569">
    <property type="entry name" value="Aldolase"/>
    <property type="match status" value="1"/>
</dbReference>
<dbReference type="SUPFAM" id="SSF89000">
    <property type="entry name" value="post-HMGL domain-like"/>
    <property type="match status" value="1"/>
</dbReference>
<dbReference type="PROSITE" id="PS50991">
    <property type="entry name" value="PYR_CT"/>
    <property type="match status" value="1"/>
</dbReference>
<evidence type="ECO:0000255" key="1">
    <source>
        <dbReference type="HAMAP-Rule" id="MF_01656"/>
    </source>
</evidence>